<evidence type="ECO:0000250" key="1">
    <source>
        <dbReference type="UniProtKB" id="A0A1L8FDW4"/>
    </source>
</evidence>
<evidence type="ECO:0000250" key="2">
    <source>
        <dbReference type="UniProtKB" id="P35056"/>
    </source>
</evidence>
<evidence type="ECO:0000250" key="3">
    <source>
        <dbReference type="UniProtKB" id="P50542"/>
    </source>
</evidence>
<evidence type="ECO:0000255" key="4"/>
<evidence type="ECO:0000255" key="5">
    <source>
        <dbReference type="PROSITE-ProRule" id="PRU00339"/>
    </source>
</evidence>
<evidence type="ECO:0000256" key="6">
    <source>
        <dbReference type="SAM" id="MobiDB-lite"/>
    </source>
</evidence>
<evidence type="ECO:0000269" key="7">
    <source>
    </source>
</evidence>
<evidence type="ECO:0000269" key="8">
    <source>
    </source>
</evidence>
<evidence type="ECO:0000269" key="9">
    <source>
    </source>
</evidence>
<evidence type="ECO:0000269" key="10">
    <source>
    </source>
</evidence>
<evidence type="ECO:0000303" key="11">
    <source>
    </source>
</evidence>
<evidence type="ECO:0000305" key="12"/>
<comment type="function">
    <text evidence="2 7 8 9 10">Receptor that mediates peroxisomal import of proteins containing a C-terminal PTS1-type tripeptide peroxisomal targeting signal (SKL-type) (PubMed:23902771, PubMed:7641682, PubMed:8098333). Binds to cargo proteins containing a PTS1 peroxisomal targeting signal in the cytosol, and translocates them into the peroxisome matrix by passing through the peroxisomal docking complex along with cargo proteins (PubMed:8098333). PEX5 receptor is then retrotranslocated into the cytosol, leading to release of bound cargo in the peroxisome matrix, and reset for a subsequent peroxisome import cycle (By similarity). Required for PEX7 ubiquitination (PubMed:25009284).</text>
</comment>
<comment type="subunit">
    <text evidence="2 7">Interacts (via WxxxF/Y and LVxEF motifs) with PEX14; promoting translocation through the PEX13-PEX14 docking complex (By similarity). Interacts with PEX8 (PubMed:23902771).</text>
</comment>
<comment type="subcellular location">
    <subcellularLocation>
        <location evidence="9">Peroxisome membrane</location>
        <topology evidence="9">Peripheral membrane protein</topology>
        <orientation evidence="9">Cytoplasmic side</orientation>
    </subcellularLocation>
    <subcellularLocation>
        <location evidence="2">Cytoplasm</location>
        <location evidence="2">Cytosol</location>
    </subcellularLocation>
    <subcellularLocation>
        <location evidence="2">Peroxisome matrix</location>
    </subcellularLocation>
    <text evidence="2 3">Cycles between the cytosol and the peroxisome matrix. Following binding to cargo proteins containing a PTS1 peroxisomal targeting signal in the cytosol, recruited to the docking complex, composed of PEX13 and PEX14, leading to translocation into the peroxisome matrix along with cargo proteins. Export and recycling to the cytosol is initiated by binding to the PEX2-PEX10-PEX12 ligase complex via its unstructured N-terminus that inserts into the ligase pore and emerges in the cytosol. Cys-10 of PEX5 is then monoubiquitinated, promoting its extraction from peroxisomal membrane by the PEX1-PEX6 AAA ATPase complex (By similarity). Extraction is accompanied by unfolding of the TPR repeats and release of bound cargo in the peroxisome matrix (By similarity). The TPR repeats refold in the cytosol and ubiquitination is removed by deubiquitinating enzyme UBP15, resetting PEX5 for a subsequent import cycle (By similarity).</text>
</comment>
<comment type="domain">
    <text evidence="9">The TPR repeats mediate interaction with proteins containing a C-terminal PTS1-type tripeptide peroxisomal targeting signal (SKL-type).</text>
</comment>
<comment type="domain">
    <text evidence="1">The WxxxF/Y motifs mediate interaction with PEX14, promoting association with the PEX13-PEX14 docking complex.</text>
</comment>
<comment type="domain">
    <text evidence="1">The amphipathic helix 1 and 2 (AH1 and AH2, respectively) are required for PEX5 retrotranslocation and recycling. AH2 mediates interaction with lumenal side of the PEX2-PEX10-PEX12 ligase complex, while AH1 is required for extraction from peroxisomal membrane by the PEX1-PEX6 AAA ATPase complex.</text>
</comment>
<comment type="domain">
    <text evidence="7">Binding of PEX8 to the N-terminus of PEX5 cargo receptor induces a conformational change of the TPR domains and decrease their binding affinity to cargo, facilitating the release of the PTS1 proteins within the peroxisome.</text>
</comment>
<comment type="PTM">
    <text evidence="2">Monoubiquitinated at Cys-10 by PEX2 during PEX5 passage through the retrotranslocation channel: monoubiquitination acts as a signal for PEX5 extraction and is required for proper export from peroxisomes and recycling. When PEX5 recycling is compromised, polyubiquitinated at Lys-22 by PEX10 during its passage through the retrotranslocation channel, leading to its degradation.</text>
</comment>
<comment type="PTM">
    <text evidence="7">A disulfide bond is created between Cys-10 and Cys-338 or Cys-444.</text>
</comment>
<comment type="disruption phenotype">
    <text evidence="10">Leads to deficiency in the import of proteins with the PTS1, but not the PTS2, targeting signal.</text>
</comment>
<comment type="similarity">
    <text evidence="12">Belongs to the peroxisomal targeting signal receptor family.</text>
</comment>
<protein>
    <recommendedName>
        <fullName>Peroxisomal targeting signal receptor</fullName>
        <shortName>PTS1 receptor</shortName>
        <shortName>PTS1R</shortName>
    </recommendedName>
    <alternativeName>
        <fullName>Peroxin-5</fullName>
    </alternativeName>
    <alternativeName>
        <fullName>Peroxisomal protein PAS8</fullName>
    </alternativeName>
</protein>
<keyword id="KW-0963">Cytoplasm</keyword>
<keyword id="KW-1015">Disulfide bond</keyword>
<keyword id="KW-1017">Isopeptide bond</keyword>
<keyword id="KW-0472">Membrane</keyword>
<keyword id="KW-0576">Peroxisome</keyword>
<keyword id="KW-0653">Protein transport</keyword>
<keyword id="KW-0677">Repeat</keyword>
<keyword id="KW-0882">Thioester bond</keyword>
<keyword id="KW-0802">TPR repeat</keyword>
<keyword id="KW-0811">Translocation</keyword>
<keyword id="KW-0813">Transport</keyword>
<keyword id="KW-0832">Ubl conjugation</keyword>
<accession>P33292</accession>
<accession>Q01967</accession>
<name>PEX5_PICPA</name>
<reference key="1">
    <citation type="journal article" date="1993" name="J. Cell Biol.">
        <title>The pas8 mutant of Pichia pastoris exhibits the peroxisomal protein import deficiencies of Zellweger syndrome cells -- the PAS8 protein binds to the COOH-terminal tripeptide peroxisomal targeting signal, and is a member of the TPR protein family.</title>
        <authorList>
            <person name="McCollum D."/>
            <person name="Monosov E."/>
            <person name="Subramani S."/>
        </authorList>
    </citation>
    <scope>NUCLEOTIDE SEQUENCE [GENOMIC DNA]</scope>
    <scope>FUNCTION</scope>
    <scope>DISRUPTION PHENOTYPE</scope>
    <source>
        <strain>ATCC 76273 / CBS 7435 / CECT 11407 / NRRL Y-11430</strain>
    </source>
</reference>
<reference key="2">
    <citation type="submission" date="1996-07" db="EMBL/GenBank/DDBJ databases">
        <authorList>
            <person name="Gould S.J."/>
            <person name="Kalish J.E."/>
            <person name="Morrel J.C."/>
            <person name="Bjorkman J."/>
            <person name="Urquhart A.J."/>
            <person name="Crane D.I."/>
        </authorList>
    </citation>
    <scope>NUCLEOTIDE SEQUENCE [GENOMIC DNA]</scope>
</reference>
<reference key="3">
    <citation type="journal article" date="1995" name="EMBO J.">
        <title>The Pichia pastoris peroxisomal protein PAS8p is the receptor for the C-terminal tripeptide peroxisomal targeting signal.</title>
        <authorList>
            <person name="Terlecky S.R."/>
            <person name="Nuttley W.M."/>
            <person name="McCollum D."/>
            <person name="Sock E."/>
            <person name="Subramani S."/>
        </authorList>
    </citation>
    <scope>FUNCTION</scope>
    <scope>SUBCELLULAR LOCATION</scope>
    <scope>DISRUPTION PHENOTYPE</scope>
    <scope>DOMAIN</scope>
</reference>
<reference key="4">
    <citation type="journal article" date="2013" name="J. Biol. Chem.">
        <title>Redox-regulated cargo binding and release by the peroxisomal targeting signal receptor, Pex5.</title>
        <authorList>
            <person name="Ma C."/>
            <person name="Hagstrom D."/>
            <person name="Polley S.G."/>
            <person name="Subramani S."/>
        </authorList>
    </citation>
    <scope>FUNCTION</scope>
    <scope>DISULFIDE BOND</scope>
    <scope>MUTAGENESIS OF CYS-10; CYS-338 AND CYS-444</scope>
    <scope>INTERACTION WITH PEX8</scope>
    <scope>DOMAIN</scope>
</reference>
<reference key="5">
    <citation type="journal article" date="2014" name="Mol. Biol. Cell">
        <title>The unique degradation pathway of the PTS2 receptor, Pex7, is dependent on the PTS receptor/coreceptor, Pex5 and Pex20.</title>
        <authorList>
            <person name="Hagstrom D."/>
            <person name="Ma C."/>
            <person name="Guha-Polley S."/>
            <person name="Subramani S."/>
        </authorList>
    </citation>
    <scope>FUNCTION</scope>
</reference>
<organism>
    <name type="scientific">Komagataella pastoris</name>
    <name type="common">Yeast</name>
    <name type="synonym">Pichia pastoris</name>
    <dbReference type="NCBI Taxonomy" id="4922"/>
    <lineage>
        <taxon>Eukaryota</taxon>
        <taxon>Fungi</taxon>
        <taxon>Dikarya</taxon>
        <taxon>Ascomycota</taxon>
        <taxon>Saccharomycotina</taxon>
        <taxon>Pichiomycetes</taxon>
        <taxon>Pichiales</taxon>
        <taxon>Pichiaceae</taxon>
        <taxon>Komagataella</taxon>
    </lineage>
</organism>
<proteinExistence type="evidence at protein level"/>
<sequence>MSLIGGGSDCAAGSNPLAQFTKHTQHDTSLQQSMRNGEFQQGNQRMMRNESTMSPMERQQMDQFMQQQNNPAFNFQPMQHELNVMQQNMNAPQQVANNSWNQEFRMKDPMVANAPSAQVQTPVQSTNWAQDFQQAGPEVQHHAQQHQHPILSVPGVRAGIYGGGRLMGGSMMNRAAQMQQQNPAQAQTSEQSQTQWEDQFKDIESMLNSKTQEPKTKQQEQNTFEQVWDDIQVSYADVELTNDQFQAQWEKDFAQYAEGRLNYGEYKYEEKNQFRNDPDAYEIGMRLMESGAKLSEAGLAFEAAVQQDPKHVDAWLKLGEVQTQNEKESDGIAALEKCLELDPTNLAALMTLAISYINDGYDNAAYATLERWIETKYPDIASRARSSNPDLDGGDRIEQNKRVTELFMKAAQLSPDVASMDADVQTGLGVLFYSMEEFDKTIDCFKAAIEVEPDKALNWNRLGAALANYNKPEEAVEAYSRALQLNPNFVRARYNLGVSFINMGRYKEAVEHLLTGISLHEVEGVDASEMSSNQGLQNNALVETLKRAFLGMNRRDLVDKVYPGMGLAQFRKMFDF</sequence>
<dbReference type="EMBL" id="Z19592">
    <property type="protein sequence ID" value="CAA79640.1"/>
    <property type="molecule type" value="Genomic_DNA"/>
</dbReference>
<dbReference type="EMBL" id="U59222">
    <property type="protein sequence ID" value="AAB40613.1"/>
    <property type="molecule type" value="Genomic_DNA"/>
</dbReference>
<dbReference type="PIR" id="A40688">
    <property type="entry name" value="A40688"/>
</dbReference>
<dbReference type="SMR" id="P33292"/>
<dbReference type="GO" id="GO:0005829">
    <property type="term" value="C:cytosol"/>
    <property type="evidence" value="ECO:0007669"/>
    <property type="project" value="UniProtKB-SubCell"/>
</dbReference>
<dbReference type="GO" id="GO:0005782">
    <property type="term" value="C:peroxisomal matrix"/>
    <property type="evidence" value="ECO:0007669"/>
    <property type="project" value="UniProtKB-SubCell"/>
</dbReference>
<dbReference type="GO" id="GO:0005778">
    <property type="term" value="C:peroxisomal membrane"/>
    <property type="evidence" value="ECO:0007669"/>
    <property type="project" value="UniProtKB-SubCell"/>
</dbReference>
<dbReference type="GO" id="GO:0005052">
    <property type="term" value="F:peroxisome matrix targeting signal-1 binding"/>
    <property type="evidence" value="ECO:0007669"/>
    <property type="project" value="TreeGrafter"/>
</dbReference>
<dbReference type="GO" id="GO:0016560">
    <property type="term" value="P:protein import into peroxisome matrix, docking"/>
    <property type="evidence" value="ECO:0007669"/>
    <property type="project" value="TreeGrafter"/>
</dbReference>
<dbReference type="Gene3D" id="1.25.40.10">
    <property type="entry name" value="Tetratricopeptide repeat domain"/>
    <property type="match status" value="1"/>
</dbReference>
<dbReference type="InterPro" id="IPR024111">
    <property type="entry name" value="PEX5/PEX5L"/>
</dbReference>
<dbReference type="InterPro" id="IPR011990">
    <property type="entry name" value="TPR-like_helical_dom_sf"/>
</dbReference>
<dbReference type="InterPro" id="IPR019734">
    <property type="entry name" value="TPR_rpt"/>
</dbReference>
<dbReference type="PANTHER" id="PTHR10130:SF0">
    <property type="entry name" value="GH08708P"/>
    <property type="match status" value="1"/>
</dbReference>
<dbReference type="PANTHER" id="PTHR10130">
    <property type="entry name" value="PEROXISOMAL TARGETING SIGNAL 1 RECEPTOR PEX5"/>
    <property type="match status" value="1"/>
</dbReference>
<dbReference type="Pfam" id="PF00515">
    <property type="entry name" value="TPR_1"/>
    <property type="match status" value="1"/>
</dbReference>
<dbReference type="Pfam" id="PF13432">
    <property type="entry name" value="TPR_16"/>
    <property type="match status" value="1"/>
</dbReference>
<dbReference type="Pfam" id="PF13181">
    <property type="entry name" value="TPR_8"/>
    <property type="match status" value="1"/>
</dbReference>
<dbReference type="SMART" id="SM00028">
    <property type="entry name" value="TPR"/>
    <property type="match status" value="4"/>
</dbReference>
<dbReference type="SUPFAM" id="SSF48452">
    <property type="entry name" value="TPR-like"/>
    <property type="match status" value="1"/>
</dbReference>
<dbReference type="PROSITE" id="PS50005">
    <property type="entry name" value="TPR"/>
    <property type="match status" value="5"/>
</dbReference>
<dbReference type="PROSITE" id="PS50293">
    <property type="entry name" value="TPR_REGION"/>
    <property type="match status" value="1"/>
</dbReference>
<gene>
    <name type="primary">PEX5</name>
    <name evidence="11" type="synonym">PAS8</name>
</gene>
<feature type="chain" id="PRO_0000106313" description="Peroxisomal targeting signal receptor">
    <location>
        <begin position="1"/>
        <end position="576"/>
    </location>
</feature>
<feature type="repeat" description="TPR 1" evidence="5">
    <location>
        <begin position="278"/>
        <end position="311"/>
    </location>
</feature>
<feature type="repeat" description="TPR 2" evidence="5">
    <location>
        <begin position="312"/>
        <end position="345"/>
    </location>
</feature>
<feature type="repeat" description="TPR 3" evidence="4">
    <location>
        <begin position="346"/>
        <end position="383"/>
    </location>
</feature>
<feature type="repeat" description="TPR 4" evidence="4">
    <location>
        <begin position="384"/>
        <end position="421"/>
    </location>
</feature>
<feature type="repeat" description="TPR 5" evidence="5">
    <location>
        <begin position="422"/>
        <end position="455"/>
    </location>
</feature>
<feature type="repeat" description="TPR 6" evidence="4">
    <location>
        <begin position="456"/>
        <end position="489"/>
    </location>
</feature>
<feature type="repeat" description="TPR 7" evidence="5">
    <location>
        <begin position="490"/>
        <end position="523"/>
    </location>
</feature>
<feature type="region of interest" description="Amphipathic helix 1 (AH1)" evidence="1">
    <location>
        <begin position="11"/>
        <end position="33"/>
    </location>
</feature>
<feature type="region of interest" description="Amphipathic helix 2 (AH2)" evidence="1">
    <location>
        <begin position="58"/>
        <end position="75"/>
    </location>
</feature>
<feature type="region of interest" description="Disordered" evidence="6">
    <location>
        <begin position="176"/>
        <end position="195"/>
    </location>
</feature>
<feature type="region of interest" description="Amphipathic helix 4 (AH4)" evidence="1">
    <location>
        <begin position="224"/>
        <end position="240"/>
    </location>
</feature>
<feature type="short sequence motif" description="WxxxF/Y motif 1" evidence="1">
    <location>
        <begin position="100"/>
        <end position="104"/>
    </location>
</feature>
<feature type="short sequence motif" description="WxxxF/Y motif 2" evidence="1">
    <location>
        <begin position="128"/>
        <end position="132"/>
    </location>
</feature>
<feature type="short sequence motif" description="WxxxF/Y motif 3" evidence="1">
    <location>
        <begin position="196"/>
        <end position="200"/>
    </location>
</feature>
<feature type="short sequence motif" description="WxxxF/Y motif 4" evidence="1">
    <location>
        <begin position="249"/>
        <end position="253"/>
    </location>
</feature>
<feature type="cross-link" description="Glycyl cysteine thioester (Cys-Gly) (interchain with G-Cter in ubiquitin)" evidence="2">
    <location>
        <position position="10"/>
    </location>
</feature>
<feature type="cross-link" description="Glycyl lysine isopeptide (Lys-Gly) (interchain with G-Cter in ubiquitin)" evidence="2">
    <location>
        <position position="22"/>
    </location>
</feature>
<feature type="mutagenesis site" description="Completely abolishes the formation of internal disulfide bond and leads to defects in importing peroxisomal PTS1 cargo." evidence="7">
    <original>C</original>
    <variation>S</variation>
    <location>
        <position position="10"/>
    </location>
</feature>
<feature type="mutagenesis site" description="Completely abolishes the formation of internal disulfide bond and leads to defects in importing peroxisomal PTS1 cargo; when associated with S-444." evidence="7">
    <original>C</original>
    <variation>S</variation>
    <location>
        <position position="338"/>
    </location>
</feature>
<feature type="mutagenesis site" description="Completely abolishes the formation of internal disulfide bond and leads to defects in importing peroxisomal PTS1 cargo; when associated with S-338." evidence="7">
    <original>C</original>
    <variation>S</variation>
    <location>
        <position position="444"/>
    </location>
</feature>
<feature type="sequence conflict" description="In Ref. 1; CAA79640." evidence="12" ref="1">
    <original>DQFQAQWEKDFAQYAEG</original>
    <variation>RPVSGSMGERFCPIRRR</variation>
    <location>
        <begin position="243"/>
        <end position="259"/>
    </location>
</feature>